<proteinExistence type="inferred from homology"/>
<reference key="1">
    <citation type="journal article" date="2002" name="Proc. Natl. Acad. Sci. U.S.A.">
        <title>Extensive mosaic structure revealed by the complete genome sequence of uropathogenic Escherichia coli.</title>
        <authorList>
            <person name="Welch R.A."/>
            <person name="Burland V."/>
            <person name="Plunkett G. III"/>
            <person name="Redford P."/>
            <person name="Roesch P."/>
            <person name="Rasko D."/>
            <person name="Buckles E.L."/>
            <person name="Liou S.-R."/>
            <person name="Boutin A."/>
            <person name="Hackett J."/>
            <person name="Stroud D."/>
            <person name="Mayhew G.F."/>
            <person name="Rose D.J."/>
            <person name="Zhou S."/>
            <person name="Schwartz D.C."/>
            <person name="Perna N.T."/>
            <person name="Mobley H.L.T."/>
            <person name="Donnenberg M.S."/>
            <person name="Blattner F.R."/>
        </authorList>
    </citation>
    <scope>NUCLEOTIDE SEQUENCE [LARGE SCALE GENOMIC DNA]</scope>
    <source>
        <strain>CFT073 / ATCC 700928 / UPEC</strain>
    </source>
</reference>
<evidence type="ECO:0000305" key="1"/>
<dbReference type="EC" id="6.3.2.2"/>
<dbReference type="EMBL" id="AE014075">
    <property type="protein sequence ID" value="AAN81697.1"/>
    <property type="molecule type" value="Genomic_DNA"/>
</dbReference>
<dbReference type="RefSeq" id="WP_000611804.1">
    <property type="nucleotide sequence ID" value="NZ_CP051263.1"/>
</dbReference>
<dbReference type="SMR" id="P0A6X0"/>
<dbReference type="STRING" id="199310.c3245"/>
<dbReference type="KEGG" id="ecc:c3245"/>
<dbReference type="eggNOG" id="COG2918">
    <property type="taxonomic scope" value="Bacteria"/>
</dbReference>
<dbReference type="HOGENOM" id="CLU_020728_3_0_6"/>
<dbReference type="BioCyc" id="ECOL199310:C3245-MONOMER"/>
<dbReference type="SABIO-RK" id="P0A6X0"/>
<dbReference type="UniPathway" id="UPA00142">
    <property type="reaction ID" value="UER00209"/>
</dbReference>
<dbReference type="Proteomes" id="UP000001410">
    <property type="component" value="Chromosome"/>
</dbReference>
<dbReference type="GO" id="GO:0005829">
    <property type="term" value="C:cytosol"/>
    <property type="evidence" value="ECO:0007669"/>
    <property type="project" value="TreeGrafter"/>
</dbReference>
<dbReference type="GO" id="GO:0005524">
    <property type="term" value="F:ATP binding"/>
    <property type="evidence" value="ECO:0007669"/>
    <property type="project" value="UniProtKB-KW"/>
</dbReference>
<dbReference type="GO" id="GO:0004357">
    <property type="term" value="F:glutamate-cysteine ligase activity"/>
    <property type="evidence" value="ECO:0007669"/>
    <property type="project" value="UniProtKB-UniRule"/>
</dbReference>
<dbReference type="GO" id="GO:0046872">
    <property type="term" value="F:metal ion binding"/>
    <property type="evidence" value="ECO:0007669"/>
    <property type="project" value="TreeGrafter"/>
</dbReference>
<dbReference type="GO" id="GO:0006750">
    <property type="term" value="P:glutathione biosynthetic process"/>
    <property type="evidence" value="ECO:0007669"/>
    <property type="project" value="UniProtKB-UniRule"/>
</dbReference>
<dbReference type="FunFam" id="3.30.590.20:FF:000001">
    <property type="entry name" value="Glutamate--cysteine ligase"/>
    <property type="match status" value="1"/>
</dbReference>
<dbReference type="Gene3D" id="3.30.590.20">
    <property type="match status" value="1"/>
</dbReference>
<dbReference type="HAMAP" id="MF_00578">
    <property type="entry name" value="Glu_cys_ligase"/>
    <property type="match status" value="1"/>
</dbReference>
<dbReference type="InterPro" id="IPR014746">
    <property type="entry name" value="Gln_synth/guanido_kin_cat_dom"/>
</dbReference>
<dbReference type="InterPro" id="IPR007370">
    <property type="entry name" value="Glu_cys_ligase"/>
</dbReference>
<dbReference type="InterPro" id="IPR006334">
    <property type="entry name" value="Glut_cys_ligase"/>
</dbReference>
<dbReference type="NCBIfam" id="TIGR01434">
    <property type="entry name" value="glu_cys_ligase"/>
    <property type="match status" value="1"/>
</dbReference>
<dbReference type="PANTHER" id="PTHR38761">
    <property type="entry name" value="GLUTAMATE--CYSTEINE LIGASE"/>
    <property type="match status" value="1"/>
</dbReference>
<dbReference type="PANTHER" id="PTHR38761:SF1">
    <property type="entry name" value="GLUTAMATE--CYSTEINE LIGASE"/>
    <property type="match status" value="1"/>
</dbReference>
<dbReference type="Pfam" id="PF04262">
    <property type="entry name" value="Glu_cys_ligase"/>
    <property type="match status" value="1"/>
</dbReference>
<dbReference type="SUPFAM" id="SSF55931">
    <property type="entry name" value="Glutamine synthetase/guanido kinase"/>
    <property type="match status" value="1"/>
</dbReference>
<feature type="chain" id="PRO_0000192525" description="Glutamate--cysteine ligase">
    <location>
        <begin position="1"/>
        <end position="518"/>
    </location>
</feature>
<sequence>MIPDVSQALAWLEKHPQALKGIQRGLERETLRVNADGTLATTGHPEALGSALTHKWITTDFAEALLEFITPVDGDIEHMLTFMRDLHRYTARNMGDERMWPLSMPCYIAEGQDIELAQYGTSNTGRFKTLYREGLKNRYGALMQTISGVHYNFSLPMAFWQAKCGDISGADAKEKISAGYFRVIRNYYRFGWVIPYLFGASPAICSSFLQGKPTSLPFEKTECGMYYLPYATSLRLSDLGYTNKSQSNLGITFNDLYEYVAGLKQAIKTPSEEYAKIGIEKDGKRLQINSNVLQIENELYAPIRPKRVTRSGESPSDALLRGGIEYIEVRSLDINPFSPIGVDEQQVRFLDLFMVWCALADAPEMSSSELACTRVNWNRVILEGRKPGLTLGIGCETAQFPLPQVGKDLFRDLKRVAQTLDSINGGEAYQKVCDELVACFDNPDLTFSARILRSMIDTGIGGTGKAFAEAYRNLLREEPLEILREEDFVAEREASERRQQEMEAADTEPFAVWLEKHA</sequence>
<protein>
    <recommendedName>
        <fullName>Glutamate--cysteine ligase</fullName>
        <ecNumber>6.3.2.2</ecNumber>
    </recommendedName>
    <alternativeName>
        <fullName>Gamma-ECS</fullName>
        <shortName>GCS</shortName>
    </alternativeName>
    <alternativeName>
        <fullName>Gamma-glutamylcysteine synthetase</fullName>
    </alternativeName>
</protein>
<organism>
    <name type="scientific">Escherichia coli O6:H1 (strain CFT073 / ATCC 700928 / UPEC)</name>
    <dbReference type="NCBI Taxonomy" id="199310"/>
    <lineage>
        <taxon>Bacteria</taxon>
        <taxon>Pseudomonadati</taxon>
        <taxon>Pseudomonadota</taxon>
        <taxon>Gammaproteobacteria</taxon>
        <taxon>Enterobacterales</taxon>
        <taxon>Enterobacteriaceae</taxon>
        <taxon>Escherichia</taxon>
    </lineage>
</organism>
<keyword id="KW-0067">ATP-binding</keyword>
<keyword id="KW-0317">Glutathione biosynthesis</keyword>
<keyword id="KW-0436">Ligase</keyword>
<keyword id="KW-0547">Nucleotide-binding</keyword>
<keyword id="KW-1185">Reference proteome</keyword>
<gene>
    <name type="primary">gshA</name>
    <name type="ordered locus">c3245</name>
</gene>
<name>GSH1_ECOL6</name>
<accession>P0A6X0</accession>
<accession>P06980</accession>
<accession>P78228</accession>
<comment type="catalytic activity">
    <reaction>
        <text>L-cysteine + L-glutamate + ATP = gamma-L-glutamyl-L-cysteine + ADP + phosphate + H(+)</text>
        <dbReference type="Rhea" id="RHEA:13285"/>
        <dbReference type="ChEBI" id="CHEBI:15378"/>
        <dbReference type="ChEBI" id="CHEBI:29985"/>
        <dbReference type="ChEBI" id="CHEBI:30616"/>
        <dbReference type="ChEBI" id="CHEBI:35235"/>
        <dbReference type="ChEBI" id="CHEBI:43474"/>
        <dbReference type="ChEBI" id="CHEBI:58173"/>
        <dbReference type="ChEBI" id="CHEBI:456216"/>
        <dbReference type="EC" id="6.3.2.2"/>
    </reaction>
</comment>
<comment type="pathway">
    <text>Sulfur metabolism; glutathione biosynthesis; glutathione from L-cysteine and L-glutamate: step 1/2.</text>
</comment>
<comment type="similarity">
    <text evidence="1">Belongs to the glutamate--cysteine ligase type 1 family. Type 1 subfamily.</text>
</comment>